<reference key="1">
    <citation type="journal article" date="2004" name="Proc. Natl. Acad. Sci. U.S.A.">
        <title>Genome sequence of the deep-sea gamma-proteobacterium Idiomarina loihiensis reveals amino acid fermentation as a source of carbon and energy.</title>
        <authorList>
            <person name="Hou S."/>
            <person name="Saw J.H."/>
            <person name="Lee K.S."/>
            <person name="Freitas T.A."/>
            <person name="Belisle C."/>
            <person name="Kawarabayasi Y."/>
            <person name="Donachie S.P."/>
            <person name="Pikina A."/>
            <person name="Galperin M.Y."/>
            <person name="Koonin E.V."/>
            <person name="Makarova K.S."/>
            <person name="Omelchenko M.V."/>
            <person name="Sorokin A."/>
            <person name="Wolf Y.I."/>
            <person name="Li Q.X."/>
            <person name="Keum Y.S."/>
            <person name="Campbell S."/>
            <person name="Denery J."/>
            <person name="Aizawa S."/>
            <person name="Shibata S."/>
            <person name="Malahoff A."/>
            <person name="Alam M."/>
        </authorList>
    </citation>
    <scope>NUCLEOTIDE SEQUENCE [LARGE SCALE GENOMIC DNA]</scope>
    <source>
        <strain>ATCC BAA-735 / DSM 15497 / L2-TR</strain>
    </source>
</reference>
<name>CSRA_IDILO</name>
<accession>Q5QUV8</accession>
<evidence type="ECO:0000255" key="1">
    <source>
        <dbReference type="HAMAP-Rule" id="MF_00167"/>
    </source>
</evidence>
<feature type="chain" id="PRO_1000023391" description="Translational regulator CsrA">
    <location>
        <begin position="1"/>
        <end position="62"/>
    </location>
</feature>
<proteinExistence type="inferred from homology"/>
<protein>
    <recommendedName>
        <fullName evidence="1">Translational regulator CsrA</fullName>
    </recommendedName>
    <alternativeName>
        <fullName evidence="1">Carbon storage regulator</fullName>
    </alternativeName>
</protein>
<keyword id="KW-0010">Activator</keyword>
<keyword id="KW-0963">Cytoplasm</keyword>
<keyword id="KW-1185">Reference proteome</keyword>
<keyword id="KW-0678">Repressor</keyword>
<keyword id="KW-0694">RNA-binding</keyword>
<keyword id="KW-0810">Translation regulation</keyword>
<dbReference type="EMBL" id="AE017340">
    <property type="protein sequence ID" value="AAV82570.1"/>
    <property type="molecule type" value="Genomic_DNA"/>
</dbReference>
<dbReference type="RefSeq" id="WP_011234973.1">
    <property type="nucleotide sequence ID" value="NC_006512.1"/>
</dbReference>
<dbReference type="SMR" id="Q5QUV8"/>
<dbReference type="STRING" id="283942.IL1737"/>
<dbReference type="GeneID" id="78252443"/>
<dbReference type="KEGG" id="ilo:IL1737"/>
<dbReference type="eggNOG" id="COG1551">
    <property type="taxonomic scope" value="Bacteria"/>
</dbReference>
<dbReference type="HOGENOM" id="CLU_164837_2_1_6"/>
<dbReference type="OrthoDB" id="9809061at2"/>
<dbReference type="Proteomes" id="UP000001171">
    <property type="component" value="Chromosome"/>
</dbReference>
<dbReference type="GO" id="GO:0005829">
    <property type="term" value="C:cytosol"/>
    <property type="evidence" value="ECO:0007669"/>
    <property type="project" value="TreeGrafter"/>
</dbReference>
<dbReference type="GO" id="GO:0048027">
    <property type="term" value="F:mRNA 5'-UTR binding"/>
    <property type="evidence" value="ECO:0007669"/>
    <property type="project" value="UniProtKB-UniRule"/>
</dbReference>
<dbReference type="GO" id="GO:0006402">
    <property type="term" value="P:mRNA catabolic process"/>
    <property type="evidence" value="ECO:0007669"/>
    <property type="project" value="InterPro"/>
</dbReference>
<dbReference type="GO" id="GO:0045947">
    <property type="term" value="P:negative regulation of translational initiation"/>
    <property type="evidence" value="ECO:0007669"/>
    <property type="project" value="UniProtKB-UniRule"/>
</dbReference>
<dbReference type="GO" id="GO:0045948">
    <property type="term" value="P:positive regulation of translational initiation"/>
    <property type="evidence" value="ECO:0007669"/>
    <property type="project" value="UniProtKB-UniRule"/>
</dbReference>
<dbReference type="GO" id="GO:0006109">
    <property type="term" value="P:regulation of carbohydrate metabolic process"/>
    <property type="evidence" value="ECO:0007669"/>
    <property type="project" value="UniProtKB-UniRule"/>
</dbReference>
<dbReference type="FunFam" id="2.60.40.4380:FF:000001">
    <property type="entry name" value="Translational regulator CsrA"/>
    <property type="match status" value="1"/>
</dbReference>
<dbReference type="Gene3D" id="2.60.40.4380">
    <property type="entry name" value="Translational regulator CsrA"/>
    <property type="match status" value="1"/>
</dbReference>
<dbReference type="HAMAP" id="MF_00167">
    <property type="entry name" value="CsrA"/>
    <property type="match status" value="1"/>
</dbReference>
<dbReference type="InterPro" id="IPR003751">
    <property type="entry name" value="CsrA"/>
</dbReference>
<dbReference type="InterPro" id="IPR036107">
    <property type="entry name" value="CsrA_sf"/>
</dbReference>
<dbReference type="NCBIfam" id="TIGR00202">
    <property type="entry name" value="csrA"/>
    <property type="match status" value="1"/>
</dbReference>
<dbReference type="NCBIfam" id="NF002469">
    <property type="entry name" value="PRK01712.1"/>
    <property type="match status" value="1"/>
</dbReference>
<dbReference type="PANTHER" id="PTHR34984">
    <property type="entry name" value="CARBON STORAGE REGULATOR"/>
    <property type="match status" value="1"/>
</dbReference>
<dbReference type="PANTHER" id="PTHR34984:SF1">
    <property type="entry name" value="CARBON STORAGE REGULATOR"/>
    <property type="match status" value="1"/>
</dbReference>
<dbReference type="Pfam" id="PF02599">
    <property type="entry name" value="CsrA"/>
    <property type="match status" value="1"/>
</dbReference>
<dbReference type="SUPFAM" id="SSF117130">
    <property type="entry name" value="CsrA-like"/>
    <property type="match status" value="1"/>
</dbReference>
<gene>
    <name evidence="1" type="primary">csrA</name>
    <name type="ordered locus">IL1737</name>
</gene>
<organism>
    <name type="scientific">Idiomarina loihiensis (strain ATCC BAA-735 / DSM 15497 / L2-TR)</name>
    <dbReference type="NCBI Taxonomy" id="283942"/>
    <lineage>
        <taxon>Bacteria</taxon>
        <taxon>Pseudomonadati</taxon>
        <taxon>Pseudomonadota</taxon>
        <taxon>Gammaproteobacteria</taxon>
        <taxon>Alteromonadales</taxon>
        <taxon>Idiomarinaceae</taxon>
        <taxon>Idiomarina</taxon>
    </lineage>
</organism>
<comment type="function">
    <text evidence="1">A key translational regulator that binds mRNA to regulate translation initiation and/or mRNA stability. Mediates global changes in gene expression, shifting from rapid growth to stress survival by linking envelope stress, the stringent response and the catabolite repression systems. Usually binds in the 5'-UTR; binding at or near the Shine-Dalgarno sequence prevents ribosome-binding, repressing translation, binding elsewhere in the 5'-UTR can activate translation and/or stabilize the mRNA. Its function is antagonized by small RNA(s).</text>
</comment>
<comment type="subunit">
    <text evidence="1">Homodimer; the beta-strands of each monomer intercalate to form a hydrophobic core, while the alpha-helices form wings that extend away from the core.</text>
</comment>
<comment type="subcellular location">
    <subcellularLocation>
        <location evidence="1">Cytoplasm</location>
    </subcellularLocation>
</comment>
<comment type="similarity">
    <text evidence="1">Belongs to the CsrA/RsmA family.</text>
</comment>
<sequence>MLILTRRVGETLMIGDDVSVTVLGVKGNQVRIGVNAPKDVSVHREEIYMRIQSEKDDEQDKE</sequence>